<proteinExistence type="inferred from homology"/>
<comment type="function">
    <text evidence="1">Core subunit of the mitochondrial membrane respiratory chain NADH dehydrogenase (Complex I) that is believed to belong to the minimal assembly required for catalysis. Complex I functions in the transfer of electrons from NADH to the respiratory chain. The immediate electron acceptor for the enzyme is believed to be ubiquinone (By similarity).</text>
</comment>
<comment type="catalytic activity">
    <reaction>
        <text>a ubiquinone + NADH + 5 H(+)(in) = a ubiquinol + NAD(+) + 4 H(+)(out)</text>
        <dbReference type="Rhea" id="RHEA:29091"/>
        <dbReference type="Rhea" id="RHEA-COMP:9565"/>
        <dbReference type="Rhea" id="RHEA-COMP:9566"/>
        <dbReference type="ChEBI" id="CHEBI:15378"/>
        <dbReference type="ChEBI" id="CHEBI:16389"/>
        <dbReference type="ChEBI" id="CHEBI:17976"/>
        <dbReference type="ChEBI" id="CHEBI:57540"/>
        <dbReference type="ChEBI" id="CHEBI:57945"/>
        <dbReference type="EC" id="7.1.1.2"/>
    </reaction>
</comment>
<comment type="subcellular location">
    <subcellularLocation>
        <location evidence="1">Mitochondrion membrane</location>
        <topology evidence="1">Multi-pass membrane protein</topology>
    </subcellularLocation>
</comment>
<comment type="similarity">
    <text evidence="3">Belongs to the complex I subunit 4 family.</text>
</comment>
<dbReference type="EC" id="7.1.1.2"/>
<dbReference type="EMBL" id="KC683708">
    <property type="protein sequence ID" value="AGG16009.1"/>
    <property type="molecule type" value="Genomic_DNA"/>
</dbReference>
<dbReference type="RefSeq" id="YP_009126721.1">
    <property type="nucleotide sequence ID" value="NC_026614.1"/>
</dbReference>
<dbReference type="SMR" id="P0CY44"/>
<dbReference type="STRING" id="367110.P0CY44"/>
<dbReference type="EnsemblFungi" id="AGG16009">
    <property type="protein sequence ID" value="AGG16009"/>
    <property type="gene ID" value="NCU16020"/>
</dbReference>
<dbReference type="GeneID" id="23681575"/>
<dbReference type="KEGG" id="ncr:NCU16020"/>
<dbReference type="VEuPathDB" id="FungiDB:NCU16020"/>
<dbReference type="InParanoid" id="P0CY44"/>
<dbReference type="OrthoDB" id="564260at2759"/>
<dbReference type="Proteomes" id="UP000001805">
    <property type="component" value="Mitochondrion"/>
</dbReference>
<dbReference type="GO" id="GO:0031966">
    <property type="term" value="C:mitochondrial membrane"/>
    <property type="evidence" value="ECO:0007669"/>
    <property type="project" value="UniProtKB-SubCell"/>
</dbReference>
<dbReference type="GO" id="GO:0045271">
    <property type="term" value="C:respiratory chain complex I"/>
    <property type="evidence" value="ECO:0000318"/>
    <property type="project" value="GO_Central"/>
</dbReference>
<dbReference type="GO" id="GO:0008137">
    <property type="term" value="F:NADH dehydrogenase (ubiquinone) activity"/>
    <property type="evidence" value="ECO:0007669"/>
    <property type="project" value="UniProtKB-EC"/>
</dbReference>
<dbReference type="GO" id="GO:0048039">
    <property type="term" value="F:ubiquinone binding"/>
    <property type="evidence" value="ECO:0000318"/>
    <property type="project" value="GO_Central"/>
</dbReference>
<dbReference type="GO" id="GO:0009060">
    <property type="term" value="P:aerobic respiration"/>
    <property type="evidence" value="ECO:0000318"/>
    <property type="project" value="GO_Central"/>
</dbReference>
<dbReference type="GO" id="GO:0042773">
    <property type="term" value="P:ATP synthesis coupled electron transport"/>
    <property type="evidence" value="ECO:0007669"/>
    <property type="project" value="InterPro"/>
</dbReference>
<dbReference type="GO" id="GO:0015990">
    <property type="term" value="P:electron transport coupled proton transport"/>
    <property type="evidence" value="ECO:0000318"/>
    <property type="project" value="GO_Central"/>
</dbReference>
<dbReference type="InterPro" id="IPR010227">
    <property type="entry name" value="NADH_Q_OxRdtase_chainM/4"/>
</dbReference>
<dbReference type="InterPro" id="IPR003918">
    <property type="entry name" value="NADH_UbQ_OxRdtase"/>
</dbReference>
<dbReference type="InterPro" id="IPR001750">
    <property type="entry name" value="ND/Mrp_TM"/>
</dbReference>
<dbReference type="NCBIfam" id="TIGR01972">
    <property type="entry name" value="NDH_I_M"/>
    <property type="match status" value="1"/>
</dbReference>
<dbReference type="PANTHER" id="PTHR43507">
    <property type="entry name" value="NADH-UBIQUINONE OXIDOREDUCTASE CHAIN 4"/>
    <property type="match status" value="1"/>
</dbReference>
<dbReference type="PANTHER" id="PTHR43507:SF1">
    <property type="entry name" value="NADH-UBIQUINONE OXIDOREDUCTASE CHAIN 4"/>
    <property type="match status" value="1"/>
</dbReference>
<dbReference type="Pfam" id="PF00361">
    <property type="entry name" value="Proton_antipo_M"/>
    <property type="match status" value="1"/>
</dbReference>
<dbReference type="PRINTS" id="PR01437">
    <property type="entry name" value="NUOXDRDTASE4"/>
</dbReference>
<geneLocation type="mitochondrion"/>
<organism>
    <name type="scientific">Neurospora crassa (strain ATCC 24698 / 74-OR23-1A / CBS 708.71 / DSM 1257 / FGSC 987)</name>
    <dbReference type="NCBI Taxonomy" id="367110"/>
    <lineage>
        <taxon>Eukaryota</taxon>
        <taxon>Fungi</taxon>
        <taxon>Dikarya</taxon>
        <taxon>Ascomycota</taxon>
        <taxon>Pezizomycotina</taxon>
        <taxon>Sordariomycetes</taxon>
        <taxon>Sordariomycetidae</taxon>
        <taxon>Sordariales</taxon>
        <taxon>Sordariaceae</taxon>
        <taxon>Neurospora</taxon>
    </lineage>
</organism>
<evidence type="ECO:0000250" key="1"/>
<evidence type="ECO:0000255" key="2"/>
<evidence type="ECO:0000305" key="3"/>
<protein>
    <recommendedName>
        <fullName>NADH-ubiquinone oxidoreductase chain 4</fullName>
        <ecNumber>7.1.1.2</ecNumber>
    </recommendedName>
    <alternativeName>
        <fullName>NADH dehydrogenase subunit 4</fullName>
    </alternativeName>
</protein>
<sequence>MKKEFLMFLFALLIIPIIGIFIIWSTQFYSKMYQYPFYYMPYPFKKVVITEGANSCMLKDGSWSQVVLTDSDDMFIQNETAPKVVAFIISILNLMVSLLVYILFDFSNNQFQFIQEHYDLSFYDIYLGVDGISIYFVLLTTIIIPIALMSNWNSITNNVKSYLIIMLLLETLLLAVFLVLDILLFYIFFESILPPLFILIGLFGSSNKVRASFYIFLYTLLGSLFLLLSILTMSSIMGTTYFDALLKSNFDYTIQIFLFCGIFIAFAVKTPTIFLNNWLLKAHVESPLGGSIVLAGIVLKLSLYGIFRLILPLLPKASLNYTYIIFVIGVITIIYASFSTLRTTDIKELIAYSSVSHAAVYLIGVFSNTIQGIEGGILLGLAHGFTSPALFFIVGGVLYDRSGTRLIHYYKGIAQMAPLLSLLFFIFSLANCGVPLTLNFVGEFMSLYGVFERLPLLGLLASSSIVFSAAYSIFLFNRVAFGGSFSKFFENSIIDLTKREFYALIFLGVLVVFLGIYPSIILDGLHYNVSSLIYSYGCKFCLG</sequence>
<reference key="1">
    <citation type="journal article" date="2003" name="Nature">
        <title>The genome sequence of the filamentous fungus Neurospora crassa.</title>
        <authorList>
            <person name="Galagan J.E."/>
            <person name="Calvo S.E."/>
            <person name="Borkovich K.A."/>
            <person name="Selker E.U."/>
            <person name="Read N.D."/>
            <person name="Jaffe D.B."/>
            <person name="FitzHugh W."/>
            <person name="Ma L.-J."/>
            <person name="Smirnov S."/>
            <person name="Purcell S."/>
            <person name="Rehman B."/>
            <person name="Elkins T."/>
            <person name="Engels R."/>
            <person name="Wang S."/>
            <person name="Nielsen C.B."/>
            <person name="Butler J."/>
            <person name="Endrizzi M."/>
            <person name="Qui D."/>
            <person name="Ianakiev P."/>
            <person name="Bell-Pedersen D."/>
            <person name="Nelson M.A."/>
            <person name="Werner-Washburne M."/>
            <person name="Selitrennikoff C.P."/>
            <person name="Kinsey J.A."/>
            <person name="Braun E.L."/>
            <person name="Zelter A."/>
            <person name="Schulte U."/>
            <person name="Kothe G.O."/>
            <person name="Jedd G."/>
            <person name="Mewes H.-W."/>
            <person name="Staben C."/>
            <person name="Marcotte E."/>
            <person name="Greenberg D."/>
            <person name="Roy A."/>
            <person name="Foley K."/>
            <person name="Naylor J."/>
            <person name="Stange-Thomann N."/>
            <person name="Barrett R."/>
            <person name="Gnerre S."/>
            <person name="Kamal M."/>
            <person name="Kamvysselis M."/>
            <person name="Mauceli E.W."/>
            <person name="Bielke C."/>
            <person name="Rudd S."/>
            <person name="Frishman D."/>
            <person name="Krystofova S."/>
            <person name="Rasmussen C."/>
            <person name="Metzenberg R.L."/>
            <person name="Perkins D.D."/>
            <person name="Kroken S."/>
            <person name="Cogoni C."/>
            <person name="Macino G."/>
            <person name="Catcheside D.E.A."/>
            <person name="Li W."/>
            <person name="Pratt R.J."/>
            <person name="Osmani S.A."/>
            <person name="DeSouza C.P.C."/>
            <person name="Glass N.L."/>
            <person name="Orbach M.J."/>
            <person name="Berglund J.A."/>
            <person name="Voelker R."/>
            <person name="Yarden O."/>
            <person name="Plamann M."/>
            <person name="Seiler S."/>
            <person name="Dunlap J.C."/>
            <person name="Radford A."/>
            <person name="Aramayo R."/>
            <person name="Natvig D.O."/>
            <person name="Alex L.A."/>
            <person name="Mannhaupt G."/>
            <person name="Ebbole D.J."/>
            <person name="Freitag M."/>
            <person name="Paulsen I."/>
            <person name="Sachs M.S."/>
            <person name="Lander E.S."/>
            <person name="Nusbaum C."/>
            <person name="Birren B.W."/>
        </authorList>
    </citation>
    <scope>NUCLEOTIDE SEQUENCE [LARGE SCALE GENOMIC DNA]</scope>
    <source>
        <strain>ATCC 24698 / 74-OR23-1A / CBS 708.71 / DSM 1257 / FGSC 987</strain>
    </source>
</reference>
<reference key="2">
    <citation type="book" date="2004" name="The Mycota II, Genetics and Biotechnology (2nd edition)">
        <title>Mitochondrial genetics of Neurospora.</title>
        <editorList>
            <person name="Kueck U."/>
        </editorList>
        <authorList>
            <person name="Kennell J.C."/>
            <person name="Collins R.A."/>
            <person name="Griffiths A.J.F."/>
            <person name="Nargang F.E."/>
        </authorList>
    </citation>
    <scope>GENOME REANNOTATION</scope>
    <source>
        <strain>ATCC 24698 / 74-OR23-1A / CBS 708.71 / DSM 1257 / FGSC 987</strain>
    </source>
</reference>
<keyword id="KW-0249">Electron transport</keyword>
<keyword id="KW-0472">Membrane</keyword>
<keyword id="KW-0496">Mitochondrion</keyword>
<keyword id="KW-0520">NAD</keyword>
<keyword id="KW-1185">Reference proteome</keyword>
<keyword id="KW-0679">Respiratory chain</keyword>
<keyword id="KW-1278">Translocase</keyword>
<keyword id="KW-0812">Transmembrane</keyword>
<keyword id="KW-1133">Transmembrane helix</keyword>
<keyword id="KW-0813">Transport</keyword>
<keyword id="KW-0830">Ubiquinone</keyword>
<name>NU4M_NEUCR</name>
<feature type="chain" id="PRO_0000414728" description="NADH-ubiquinone oxidoreductase chain 4">
    <location>
        <begin position="1"/>
        <end position="543"/>
    </location>
</feature>
<feature type="transmembrane region" description="Helical" evidence="2">
    <location>
        <begin position="5"/>
        <end position="25"/>
    </location>
</feature>
<feature type="transmembrane region" description="Helical" evidence="2">
    <location>
        <begin position="84"/>
        <end position="104"/>
    </location>
</feature>
<feature type="transmembrane region" description="Helical" evidence="2">
    <location>
        <begin position="129"/>
        <end position="149"/>
    </location>
</feature>
<feature type="transmembrane region" description="Helical" evidence="2">
    <location>
        <begin position="161"/>
        <end position="181"/>
    </location>
</feature>
<feature type="transmembrane region" description="Helical" evidence="2">
    <location>
        <begin position="182"/>
        <end position="202"/>
    </location>
</feature>
<feature type="transmembrane region" description="Helical" evidence="2">
    <location>
        <begin position="213"/>
        <end position="233"/>
    </location>
</feature>
<feature type="transmembrane region" description="Helical" evidence="2">
    <location>
        <begin position="254"/>
        <end position="274"/>
    </location>
</feature>
<feature type="transmembrane region" description="Helical" evidence="2">
    <location>
        <begin position="287"/>
        <end position="307"/>
    </location>
</feature>
<feature type="transmembrane region" description="Helical" evidence="2">
    <location>
        <begin position="321"/>
        <end position="341"/>
    </location>
</feature>
<feature type="transmembrane region" description="Helical" evidence="2">
    <location>
        <begin position="350"/>
        <end position="370"/>
    </location>
</feature>
<feature type="transmembrane region" description="Helical" evidence="2">
    <location>
        <begin position="377"/>
        <end position="397"/>
    </location>
</feature>
<feature type="transmembrane region" description="Helical" evidence="2">
    <location>
        <begin position="416"/>
        <end position="436"/>
    </location>
</feature>
<feature type="transmembrane region" description="Helical" evidence="2">
    <location>
        <begin position="456"/>
        <end position="476"/>
    </location>
</feature>
<feature type="transmembrane region" description="Helical" evidence="2">
    <location>
        <begin position="501"/>
        <end position="521"/>
    </location>
</feature>
<gene>
    <name type="primary">ndh-4</name>
    <name type="synonym">ND4</name>
    <name type="ORF">NCU16020</name>
</gene>
<accession>P0CY44</accession>
<accession>M1RM78</accession>